<gene>
    <name evidence="1" type="primary">dadA</name>
    <name type="ordered locus">KPK_1985</name>
</gene>
<organism>
    <name type="scientific">Klebsiella pneumoniae (strain 342)</name>
    <dbReference type="NCBI Taxonomy" id="507522"/>
    <lineage>
        <taxon>Bacteria</taxon>
        <taxon>Pseudomonadati</taxon>
        <taxon>Pseudomonadota</taxon>
        <taxon>Gammaproteobacteria</taxon>
        <taxon>Enterobacterales</taxon>
        <taxon>Enterobacteriaceae</taxon>
        <taxon>Klebsiella/Raoultella group</taxon>
        <taxon>Klebsiella</taxon>
        <taxon>Klebsiella pneumoniae complex</taxon>
    </lineage>
</organism>
<feature type="chain" id="PRO_1000138656" description="D-amino acid dehydrogenase">
    <location>
        <begin position="1"/>
        <end position="432"/>
    </location>
</feature>
<feature type="binding site" evidence="1">
    <location>
        <begin position="3"/>
        <end position="17"/>
    </location>
    <ligand>
        <name>FAD</name>
        <dbReference type="ChEBI" id="CHEBI:57692"/>
    </ligand>
</feature>
<dbReference type="EC" id="1.4.99.-" evidence="1"/>
<dbReference type="EMBL" id="CP000964">
    <property type="protein sequence ID" value="ACI11038.1"/>
    <property type="molecule type" value="Genomic_DNA"/>
</dbReference>
<dbReference type="SMR" id="B5XQ81"/>
<dbReference type="KEGG" id="kpe:KPK_1985"/>
<dbReference type="HOGENOM" id="CLU_007884_9_2_6"/>
<dbReference type="UniPathway" id="UPA00043">
    <property type="reaction ID" value="UER00498"/>
</dbReference>
<dbReference type="Proteomes" id="UP000001734">
    <property type="component" value="Chromosome"/>
</dbReference>
<dbReference type="GO" id="GO:0005737">
    <property type="term" value="C:cytoplasm"/>
    <property type="evidence" value="ECO:0007669"/>
    <property type="project" value="TreeGrafter"/>
</dbReference>
<dbReference type="GO" id="GO:0005886">
    <property type="term" value="C:plasma membrane"/>
    <property type="evidence" value="ECO:0007669"/>
    <property type="project" value="TreeGrafter"/>
</dbReference>
<dbReference type="GO" id="GO:0008718">
    <property type="term" value="F:D-amino-acid dehydrogenase activity"/>
    <property type="evidence" value="ECO:0007669"/>
    <property type="project" value="UniProtKB-UniRule"/>
</dbReference>
<dbReference type="GO" id="GO:0055130">
    <property type="term" value="P:D-alanine catabolic process"/>
    <property type="evidence" value="ECO:0007669"/>
    <property type="project" value="UniProtKB-UniPathway"/>
</dbReference>
<dbReference type="FunFam" id="3.50.50.60:FF:000020">
    <property type="entry name" value="D-amino acid dehydrogenase"/>
    <property type="match status" value="1"/>
</dbReference>
<dbReference type="Gene3D" id="3.30.9.10">
    <property type="entry name" value="D-Amino Acid Oxidase, subunit A, domain 2"/>
    <property type="match status" value="1"/>
</dbReference>
<dbReference type="Gene3D" id="3.50.50.60">
    <property type="entry name" value="FAD/NAD(P)-binding domain"/>
    <property type="match status" value="2"/>
</dbReference>
<dbReference type="HAMAP" id="MF_01202">
    <property type="entry name" value="DadA"/>
    <property type="match status" value="1"/>
</dbReference>
<dbReference type="InterPro" id="IPR023080">
    <property type="entry name" value="DadA"/>
</dbReference>
<dbReference type="InterPro" id="IPR006076">
    <property type="entry name" value="FAD-dep_OxRdtase"/>
</dbReference>
<dbReference type="InterPro" id="IPR036188">
    <property type="entry name" value="FAD/NAD-bd_sf"/>
</dbReference>
<dbReference type="NCBIfam" id="NF001933">
    <property type="entry name" value="PRK00711.1"/>
    <property type="match status" value="1"/>
</dbReference>
<dbReference type="PANTHER" id="PTHR13847:SF280">
    <property type="entry name" value="D-AMINO ACID DEHYDROGENASE"/>
    <property type="match status" value="1"/>
</dbReference>
<dbReference type="PANTHER" id="PTHR13847">
    <property type="entry name" value="SARCOSINE DEHYDROGENASE-RELATED"/>
    <property type="match status" value="1"/>
</dbReference>
<dbReference type="Pfam" id="PF01266">
    <property type="entry name" value="DAO"/>
    <property type="match status" value="1"/>
</dbReference>
<dbReference type="SUPFAM" id="SSF54373">
    <property type="entry name" value="FAD-linked reductases, C-terminal domain"/>
    <property type="match status" value="1"/>
</dbReference>
<dbReference type="SUPFAM" id="SSF51905">
    <property type="entry name" value="FAD/NAD(P)-binding domain"/>
    <property type="match status" value="1"/>
</dbReference>
<evidence type="ECO:0000255" key="1">
    <source>
        <dbReference type="HAMAP-Rule" id="MF_01202"/>
    </source>
</evidence>
<name>DADA_KLEP3</name>
<protein>
    <recommendedName>
        <fullName evidence="1">D-amino acid dehydrogenase</fullName>
        <ecNumber evidence="1">1.4.99.-</ecNumber>
    </recommendedName>
</protein>
<sequence length="432" mass="47206">MRVVILGSGVVGVASAWYLSQAGHEVTVIDRQPGPAEETSAANAGQISPGYAAPWAAPGVPLKAIKWMFQRHAPLAIGLDGTSFQLKWMWQMLRNCDTRHYMENKGRMVRLAEYSRDCLKALRDTTGIQYEGRQGGTLQLFRTAKQYENATRDIAVLEDAGVPYQLLEAKRLAEVEPALAEVSHKLTGGLRLPNDETGDCQLFTTRLAAMAEQAGVTFRFNTAVDALLQEGDRIAGVKCGDEIIKGDAYVMAFGSYSTAMLKGLVDIPVYPLKGYSLTIPIAQEDGAPVSTILDETYKIAITRFDQRIRVGGMAEIVGFNKALLQPRRETLEMVVRDLFPRGGHVEQATFWTGLRPMTPDGTPVVGRTAYKNLWLNTGHGTLGWTMACGSGQLISDLISGRTPAIPYDDLAVARYSPGFTPARPQHLHGAHN</sequence>
<reference key="1">
    <citation type="journal article" date="2008" name="PLoS Genet.">
        <title>Complete genome sequence of the N2-fixing broad host range endophyte Klebsiella pneumoniae 342 and virulence predictions verified in mice.</title>
        <authorList>
            <person name="Fouts D.E."/>
            <person name="Tyler H.L."/>
            <person name="DeBoy R.T."/>
            <person name="Daugherty S."/>
            <person name="Ren Q."/>
            <person name="Badger J.H."/>
            <person name="Durkin A.S."/>
            <person name="Huot H."/>
            <person name="Shrivastava S."/>
            <person name="Kothari S."/>
            <person name="Dodson R.J."/>
            <person name="Mohamoud Y."/>
            <person name="Khouri H."/>
            <person name="Roesch L.F.W."/>
            <person name="Krogfelt K.A."/>
            <person name="Struve C."/>
            <person name="Triplett E.W."/>
            <person name="Methe B.A."/>
        </authorList>
    </citation>
    <scope>NUCLEOTIDE SEQUENCE [LARGE SCALE GENOMIC DNA]</scope>
    <source>
        <strain>342</strain>
    </source>
</reference>
<proteinExistence type="inferred from homology"/>
<accession>B5XQ81</accession>
<keyword id="KW-0274">FAD</keyword>
<keyword id="KW-0285">Flavoprotein</keyword>
<keyword id="KW-0560">Oxidoreductase</keyword>
<comment type="function">
    <text evidence="1">Oxidative deamination of D-amino acids.</text>
</comment>
<comment type="catalytic activity">
    <reaction evidence="1">
        <text>a D-alpha-amino acid + A + H2O = a 2-oxocarboxylate + AH2 + NH4(+)</text>
        <dbReference type="Rhea" id="RHEA:18125"/>
        <dbReference type="ChEBI" id="CHEBI:13193"/>
        <dbReference type="ChEBI" id="CHEBI:15377"/>
        <dbReference type="ChEBI" id="CHEBI:17499"/>
        <dbReference type="ChEBI" id="CHEBI:28938"/>
        <dbReference type="ChEBI" id="CHEBI:35179"/>
        <dbReference type="ChEBI" id="CHEBI:59871"/>
    </reaction>
</comment>
<comment type="cofactor">
    <cofactor evidence="1">
        <name>FAD</name>
        <dbReference type="ChEBI" id="CHEBI:57692"/>
    </cofactor>
</comment>
<comment type="pathway">
    <text>Amino-acid degradation; D-alanine degradation; NH(3) and pyruvate from D-alanine: step 1/1.</text>
</comment>
<comment type="similarity">
    <text evidence="1">Belongs to the DadA oxidoreductase family.</text>
</comment>